<feature type="chain" id="PRO_0000309913" description="Large ribosomal subunit protein uL2">
    <location>
        <begin position="1"/>
        <end position="273"/>
    </location>
</feature>
<feature type="region of interest" description="Disordered" evidence="2">
    <location>
        <begin position="28"/>
        <end position="53"/>
    </location>
</feature>
<feature type="region of interest" description="Disordered" evidence="2">
    <location>
        <begin position="221"/>
        <end position="273"/>
    </location>
</feature>
<feature type="compositionally biased region" description="Low complexity" evidence="2">
    <location>
        <begin position="39"/>
        <end position="48"/>
    </location>
</feature>
<feature type="modified residue" description="N6-acetyllysine" evidence="1">
    <location>
        <position position="242"/>
    </location>
</feature>
<sequence>MAVVKCKPTSPGRRHVVKVVNPELHKGKPFAPLLEKNSKSGGRNNNGRITTRHIGGGHKQAYRIVDFKRNKDGIPAVVERLEYDPNRSANIALVLYKDGERRYILAPKGLKAGDQIQSGVDAAIKPGNTLPMRNIPVGSTVHNVEMKPGKGGQLARSAGTYVQIVARDGAYVTLRLRSGEMRKVEADCRATLGEVGNAEHMLRVLGKAGAARWRGVRPTVRGTAMNPVDHPHGGGEGRNFGKHPVTPWGVQTKGKKTRSNKRTDKFIVRRRSK</sequence>
<proteinExistence type="inferred from homology"/>
<dbReference type="EMBL" id="CP000243">
    <property type="protein sequence ID" value="ABE09207.1"/>
    <property type="molecule type" value="Genomic_DNA"/>
</dbReference>
<dbReference type="RefSeq" id="WP_000301864.1">
    <property type="nucleotide sequence ID" value="NZ_CP064825.1"/>
</dbReference>
<dbReference type="SMR" id="Q1R607"/>
<dbReference type="GeneID" id="93778670"/>
<dbReference type="KEGG" id="eci:UTI89_C3770"/>
<dbReference type="HOGENOM" id="CLU_036235_2_1_6"/>
<dbReference type="Proteomes" id="UP000001952">
    <property type="component" value="Chromosome"/>
</dbReference>
<dbReference type="GO" id="GO:0005829">
    <property type="term" value="C:cytosol"/>
    <property type="evidence" value="ECO:0007669"/>
    <property type="project" value="UniProtKB-ARBA"/>
</dbReference>
<dbReference type="GO" id="GO:0015934">
    <property type="term" value="C:large ribosomal subunit"/>
    <property type="evidence" value="ECO:0007669"/>
    <property type="project" value="InterPro"/>
</dbReference>
<dbReference type="GO" id="GO:0019843">
    <property type="term" value="F:rRNA binding"/>
    <property type="evidence" value="ECO:0007669"/>
    <property type="project" value="UniProtKB-UniRule"/>
</dbReference>
<dbReference type="GO" id="GO:0003735">
    <property type="term" value="F:structural constituent of ribosome"/>
    <property type="evidence" value="ECO:0007669"/>
    <property type="project" value="InterPro"/>
</dbReference>
<dbReference type="GO" id="GO:0016740">
    <property type="term" value="F:transferase activity"/>
    <property type="evidence" value="ECO:0007669"/>
    <property type="project" value="InterPro"/>
</dbReference>
<dbReference type="GO" id="GO:0002181">
    <property type="term" value="P:cytoplasmic translation"/>
    <property type="evidence" value="ECO:0007669"/>
    <property type="project" value="TreeGrafter"/>
</dbReference>
<dbReference type="FunFam" id="2.30.30.30:FF:000001">
    <property type="entry name" value="50S ribosomal protein L2"/>
    <property type="match status" value="1"/>
</dbReference>
<dbReference type="FunFam" id="2.40.50.140:FF:000003">
    <property type="entry name" value="50S ribosomal protein L2"/>
    <property type="match status" value="1"/>
</dbReference>
<dbReference type="FunFam" id="4.10.950.10:FF:000001">
    <property type="entry name" value="50S ribosomal protein L2"/>
    <property type="match status" value="1"/>
</dbReference>
<dbReference type="Gene3D" id="2.30.30.30">
    <property type="match status" value="1"/>
</dbReference>
<dbReference type="Gene3D" id="2.40.50.140">
    <property type="entry name" value="Nucleic acid-binding proteins"/>
    <property type="match status" value="1"/>
</dbReference>
<dbReference type="Gene3D" id="4.10.950.10">
    <property type="entry name" value="Ribosomal protein L2, domain 3"/>
    <property type="match status" value="1"/>
</dbReference>
<dbReference type="HAMAP" id="MF_01320_B">
    <property type="entry name" value="Ribosomal_uL2_B"/>
    <property type="match status" value="1"/>
</dbReference>
<dbReference type="InterPro" id="IPR012340">
    <property type="entry name" value="NA-bd_OB-fold"/>
</dbReference>
<dbReference type="InterPro" id="IPR014722">
    <property type="entry name" value="Rib_uL2_dom2"/>
</dbReference>
<dbReference type="InterPro" id="IPR002171">
    <property type="entry name" value="Ribosomal_uL2"/>
</dbReference>
<dbReference type="InterPro" id="IPR005880">
    <property type="entry name" value="Ribosomal_uL2_bac/org-type"/>
</dbReference>
<dbReference type="InterPro" id="IPR022669">
    <property type="entry name" value="Ribosomal_uL2_C"/>
</dbReference>
<dbReference type="InterPro" id="IPR022671">
    <property type="entry name" value="Ribosomal_uL2_CS"/>
</dbReference>
<dbReference type="InterPro" id="IPR014726">
    <property type="entry name" value="Ribosomal_uL2_dom3"/>
</dbReference>
<dbReference type="InterPro" id="IPR022666">
    <property type="entry name" value="Ribosomal_uL2_RNA-bd_dom"/>
</dbReference>
<dbReference type="InterPro" id="IPR008991">
    <property type="entry name" value="Translation_prot_SH3-like_sf"/>
</dbReference>
<dbReference type="NCBIfam" id="TIGR01171">
    <property type="entry name" value="rplB_bact"/>
    <property type="match status" value="1"/>
</dbReference>
<dbReference type="PANTHER" id="PTHR13691:SF5">
    <property type="entry name" value="LARGE RIBOSOMAL SUBUNIT PROTEIN UL2M"/>
    <property type="match status" value="1"/>
</dbReference>
<dbReference type="PANTHER" id="PTHR13691">
    <property type="entry name" value="RIBOSOMAL PROTEIN L2"/>
    <property type="match status" value="1"/>
</dbReference>
<dbReference type="Pfam" id="PF00181">
    <property type="entry name" value="Ribosomal_L2"/>
    <property type="match status" value="1"/>
</dbReference>
<dbReference type="Pfam" id="PF03947">
    <property type="entry name" value="Ribosomal_L2_C"/>
    <property type="match status" value="1"/>
</dbReference>
<dbReference type="PIRSF" id="PIRSF002158">
    <property type="entry name" value="Ribosomal_L2"/>
    <property type="match status" value="1"/>
</dbReference>
<dbReference type="SMART" id="SM01383">
    <property type="entry name" value="Ribosomal_L2"/>
    <property type="match status" value="1"/>
</dbReference>
<dbReference type="SMART" id="SM01382">
    <property type="entry name" value="Ribosomal_L2_C"/>
    <property type="match status" value="1"/>
</dbReference>
<dbReference type="SUPFAM" id="SSF50249">
    <property type="entry name" value="Nucleic acid-binding proteins"/>
    <property type="match status" value="1"/>
</dbReference>
<dbReference type="SUPFAM" id="SSF50104">
    <property type="entry name" value="Translation proteins SH3-like domain"/>
    <property type="match status" value="1"/>
</dbReference>
<dbReference type="PROSITE" id="PS00467">
    <property type="entry name" value="RIBOSOMAL_L2"/>
    <property type="match status" value="1"/>
</dbReference>
<accession>Q1R607</accession>
<comment type="function">
    <text evidence="1">One of the primary rRNA binding proteins. Required for association of the 30S and 50S subunits to form the 70S ribosome, for tRNA binding and peptide bond formation. It has been suggested to have peptidyltransferase activity; this is somewhat controversial. Makes several contacts with the 16S rRNA in the 70S ribosome.</text>
</comment>
<comment type="subunit">
    <text evidence="1">Part of the 50S ribosomal subunit. Forms a bridge to the 30S subunit in the 70S ribosome.</text>
</comment>
<comment type="similarity">
    <text evidence="1">Belongs to the universal ribosomal protein uL2 family.</text>
</comment>
<gene>
    <name evidence="1" type="primary">rplB</name>
    <name type="ordered locus">UTI89_C3770</name>
</gene>
<reference key="1">
    <citation type="journal article" date="2006" name="Proc. Natl. Acad. Sci. U.S.A.">
        <title>Identification of genes subject to positive selection in uropathogenic strains of Escherichia coli: a comparative genomics approach.</title>
        <authorList>
            <person name="Chen S.L."/>
            <person name="Hung C.-S."/>
            <person name="Xu J."/>
            <person name="Reigstad C.S."/>
            <person name="Magrini V."/>
            <person name="Sabo A."/>
            <person name="Blasiar D."/>
            <person name="Bieri T."/>
            <person name="Meyer R.R."/>
            <person name="Ozersky P."/>
            <person name="Armstrong J.R."/>
            <person name="Fulton R.S."/>
            <person name="Latreille J.P."/>
            <person name="Spieth J."/>
            <person name="Hooton T.M."/>
            <person name="Mardis E.R."/>
            <person name="Hultgren S.J."/>
            <person name="Gordon J.I."/>
        </authorList>
    </citation>
    <scope>NUCLEOTIDE SEQUENCE [LARGE SCALE GENOMIC DNA]</scope>
    <source>
        <strain>UTI89 / UPEC</strain>
    </source>
</reference>
<name>RL2_ECOUT</name>
<keyword id="KW-0007">Acetylation</keyword>
<keyword id="KW-0687">Ribonucleoprotein</keyword>
<keyword id="KW-0689">Ribosomal protein</keyword>
<keyword id="KW-0694">RNA-binding</keyword>
<keyword id="KW-0699">rRNA-binding</keyword>
<protein>
    <recommendedName>
        <fullName evidence="1">Large ribosomal subunit protein uL2</fullName>
    </recommendedName>
    <alternativeName>
        <fullName evidence="3">50S ribosomal protein L2</fullName>
    </alternativeName>
</protein>
<evidence type="ECO:0000255" key="1">
    <source>
        <dbReference type="HAMAP-Rule" id="MF_01320"/>
    </source>
</evidence>
<evidence type="ECO:0000256" key="2">
    <source>
        <dbReference type="SAM" id="MobiDB-lite"/>
    </source>
</evidence>
<evidence type="ECO:0000305" key="3"/>
<organism>
    <name type="scientific">Escherichia coli (strain UTI89 / UPEC)</name>
    <dbReference type="NCBI Taxonomy" id="364106"/>
    <lineage>
        <taxon>Bacteria</taxon>
        <taxon>Pseudomonadati</taxon>
        <taxon>Pseudomonadota</taxon>
        <taxon>Gammaproteobacteria</taxon>
        <taxon>Enterobacterales</taxon>
        <taxon>Enterobacteriaceae</taxon>
        <taxon>Escherichia</taxon>
    </lineage>
</organism>